<sequence length="421" mass="45090">MKARIESVQAMPIYDSRGVPTVRVRLTLTDGTAATASIPSGASTGENEAVELRDGDPKAHGGKGVLKAVSNVNDVIAPAVMGLEPWRQAEIDRLMIELDGTANKERLGANAILGVSEAVAAAAAKSAGLPLYAYLGGAGQARLPIPMINILNGGKHADSSLDFQEFMIMPVGAPSFAEAMRYATETFQALKSILKAKGHATSVGDEGGFAPQLQSNDEACDLIVEAITKAGYEPGEDIAIALDPAASSFHENGVYRLTRSGQGDKTSSEMTDLYRRWIDKYPIVSIEDGLAENDWDGFREHTAVLGEKIQIVGDDLLVTNTRFIQRAIEEKSCNAVLIKLNQIGTVTETVEAIHLCRKAGWGFVISHRSGETEDTFMADFAVAMGGGQIKTGSVCRSERMAKYNRLLEIESDLGKAARFGR</sequence>
<dbReference type="EC" id="4.2.1.11" evidence="1"/>
<dbReference type="EMBL" id="AE017282">
    <property type="protein sequence ID" value="AAU92078.1"/>
    <property type="molecule type" value="Genomic_DNA"/>
</dbReference>
<dbReference type="SMR" id="Q606T2"/>
<dbReference type="STRING" id="243233.MCA1933"/>
<dbReference type="GeneID" id="88224168"/>
<dbReference type="KEGG" id="mca:MCA1933"/>
<dbReference type="eggNOG" id="COG0148">
    <property type="taxonomic scope" value="Bacteria"/>
</dbReference>
<dbReference type="HOGENOM" id="CLU_031223_2_1_6"/>
<dbReference type="UniPathway" id="UPA00109">
    <property type="reaction ID" value="UER00187"/>
</dbReference>
<dbReference type="Proteomes" id="UP000006821">
    <property type="component" value="Chromosome"/>
</dbReference>
<dbReference type="GO" id="GO:0009986">
    <property type="term" value="C:cell surface"/>
    <property type="evidence" value="ECO:0007669"/>
    <property type="project" value="UniProtKB-SubCell"/>
</dbReference>
<dbReference type="GO" id="GO:0005576">
    <property type="term" value="C:extracellular region"/>
    <property type="evidence" value="ECO:0007669"/>
    <property type="project" value="UniProtKB-SubCell"/>
</dbReference>
<dbReference type="GO" id="GO:0000015">
    <property type="term" value="C:phosphopyruvate hydratase complex"/>
    <property type="evidence" value="ECO:0007669"/>
    <property type="project" value="InterPro"/>
</dbReference>
<dbReference type="GO" id="GO:0000287">
    <property type="term" value="F:magnesium ion binding"/>
    <property type="evidence" value="ECO:0007669"/>
    <property type="project" value="UniProtKB-UniRule"/>
</dbReference>
<dbReference type="GO" id="GO:0004634">
    <property type="term" value="F:phosphopyruvate hydratase activity"/>
    <property type="evidence" value="ECO:0007669"/>
    <property type="project" value="UniProtKB-UniRule"/>
</dbReference>
<dbReference type="GO" id="GO:0006096">
    <property type="term" value="P:glycolytic process"/>
    <property type="evidence" value="ECO:0007669"/>
    <property type="project" value="UniProtKB-UniRule"/>
</dbReference>
<dbReference type="CDD" id="cd03313">
    <property type="entry name" value="enolase"/>
    <property type="match status" value="1"/>
</dbReference>
<dbReference type="Gene3D" id="3.20.20.120">
    <property type="entry name" value="Enolase-like C-terminal domain"/>
    <property type="match status" value="1"/>
</dbReference>
<dbReference type="Gene3D" id="3.30.390.10">
    <property type="entry name" value="Enolase-like, N-terminal domain"/>
    <property type="match status" value="1"/>
</dbReference>
<dbReference type="HAMAP" id="MF_00318">
    <property type="entry name" value="Enolase"/>
    <property type="match status" value="1"/>
</dbReference>
<dbReference type="InterPro" id="IPR000941">
    <property type="entry name" value="Enolase"/>
</dbReference>
<dbReference type="InterPro" id="IPR036849">
    <property type="entry name" value="Enolase-like_C_sf"/>
</dbReference>
<dbReference type="InterPro" id="IPR029017">
    <property type="entry name" value="Enolase-like_N"/>
</dbReference>
<dbReference type="InterPro" id="IPR020810">
    <property type="entry name" value="Enolase_C"/>
</dbReference>
<dbReference type="InterPro" id="IPR020809">
    <property type="entry name" value="Enolase_CS"/>
</dbReference>
<dbReference type="InterPro" id="IPR020811">
    <property type="entry name" value="Enolase_N"/>
</dbReference>
<dbReference type="NCBIfam" id="TIGR01060">
    <property type="entry name" value="eno"/>
    <property type="match status" value="1"/>
</dbReference>
<dbReference type="PANTHER" id="PTHR11902">
    <property type="entry name" value="ENOLASE"/>
    <property type="match status" value="1"/>
</dbReference>
<dbReference type="PANTHER" id="PTHR11902:SF1">
    <property type="entry name" value="ENOLASE"/>
    <property type="match status" value="1"/>
</dbReference>
<dbReference type="Pfam" id="PF00113">
    <property type="entry name" value="Enolase_C"/>
    <property type="match status" value="1"/>
</dbReference>
<dbReference type="Pfam" id="PF03952">
    <property type="entry name" value="Enolase_N"/>
    <property type="match status" value="1"/>
</dbReference>
<dbReference type="PIRSF" id="PIRSF001400">
    <property type="entry name" value="Enolase"/>
    <property type="match status" value="1"/>
</dbReference>
<dbReference type="PRINTS" id="PR00148">
    <property type="entry name" value="ENOLASE"/>
</dbReference>
<dbReference type="SFLD" id="SFLDF00002">
    <property type="entry name" value="enolase"/>
    <property type="match status" value="1"/>
</dbReference>
<dbReference type="SFLD" id="SFLDG00178">
    <property type="entry name" value="enolase"/>
    <property type="match status" value="1"/>
</dbReference>
<dbReference type="SMART" id="SM01192">
    <property type="entry name" value="Enolase_C"/>
    <property type="match status" value="1"/>
</dbReference>
<dbReference type="SMART" id="SM01193">
    <property type="entry name" value="Enolase_N"/>
    <property type="match status" value="1"/>
</dbReference>
<dbReference type="SUPFAM" id="SSF51604">
    <property type="entry name" value="Enolase C-terminal domain-like"/>
    <property type="match status" value="1"/>
</dbReference>
<dbReference type="SUPFAM" id="SSF54826">
    <property type="entry name" value="Enolase N-terminal domain-like"/>
    <property type="match status" value="1"/>
</dbReference>
<dbReference type="PROSITE" id="PS00164">
    <property type="entry name" value="ENOLASE"/>
    <property type="match status" value="1"/>
</dbReference>
<comment type="function">
    <text evidence="1">Catalyzes the reversible conversion of 2-phosphoglycerate (2-PG) into phosphoenolpyruvate (PEP). It is essential for the degradation of carbohydrates via glycolysis.</text>
</comment>
<comment type="catalytic activity">
    <reaction evidence="1">
        <text>(2R)-2-phosphoglycerate = phosphoenolpyruvate + H2O</text>
        <dbReference type="Rhea" id="RHEA:10164"/>
        <dbReference type="ChEBI" id="CHEBI:15377"/>
        <dbReference type="ChEBI" id="CHEBI:58289"/>
        <dbReference type="ChEBI" id="CHEBI:58702"/>
        <dbReference type="EC" id="4.2.1.11"/>
    </reaction>
</comment>
<comment type="cofactor">
    <cofactor evidence="1">
        <name>Mg(2+)</name>
        <dbReference type="ChEBI" id="CHEBI:18420"/>
    </cofactor>
    <text evidence="1">Binds a second Mg(2+) ion via substrate during catalysis.</text>
</comment>
<comment type="pathway">
    <text evidence="1">Carbohydrate degradation; glycolysis; pyruvate from D-glyceraldehyde 3-phosphate: step 4/5.</text>
</comment>
<comment type="subunit">
    <text evidence="1">Component of the RNA degradosome, a multiprotein complex involved in RNA processing and mRNA degradation.</text>
</comment>
<comment type="subcellular location">
    <subcellularLocation>
        <location evidence="1">Cytoplasm</location>
    </subcellularLocation>
    <subcellularLocation>
        <location evidence="1">Secreted</location>
    </subcellularLocation>
    <subcellularLocation>
        <location evidence="1">Cell surface</location>
    </subcellularLocation>
    <text evidence="1">Fractions of enolase are present in both the cytoplasm and on the cell surface.</text>
</comment>
<comment type="similarity">
    <text evidence="1">Belongs to the enolase family.</text>
</comment>
<feature type="chain" id="PRO_0000133919" description="Enolase 1">
    <location>
        <begin position="1"/>
        <end position="421"/>
    </location>
</feature>
<feature type="active site" description="Proton donor" evidence="1">
    <location>
        <position position="206"/>
    </location>
</feature>
<feature type="active site" description="Proton acceptor" evidence="1">
    <location>
        <position position="339"/>
    </location>
</feature>
<feature type="binding site" evidence="1">
    <location>
        <position position="164"/>
    </location>
    <ligand>
        <name>(2R)-2-phosphoglycerate</name>
        <dbReference type="ChEBI" id="CHEBI:58289"/>
    </ligand>
</feature>
<feature type="binding site" evidence="1">
    <location>
        <position position="243"/>
    </location>
    <ligand>
        <name>Mg(2+)</name>
        <dbReference type="ChEBI" id="CHEBI:18420"/>
    </ligand>
</feature>
<feature type="binding site" evidence="1">
    <location>
        <position position="287"/>
    </location>
    <ligand>
        <name>Mg(2+)</name>
        <dbReference type="ChEBI" id="CHEBI:18420"/>
    </ligand>
</feature>
<feature type="binding site" evidence="1">
    <location>
        <position position="314"/>
    </location>
    <ligand>
        <name>Mg(2+)</name>
        <dbReference type="ChEBI" id="CHEBI:18420"/>
    </ligand>
</feature>
<feature type="binding site" evidence="1">
    <location>
        <position position="339"/>
    </location>
    <ligand>
        <name>(2R)-2-phosphoglycerate</name>
        <dbReference type="ChEBI" id="CHEBI:58289"/>
    </ligand>
</feature>
<feature type="binding site" evidence="1">
    <location>
        <position position="368"/>
    </location>
    <ligand>
        <name>(2R)-2-phosphoglycerate</name>
        <dbReference type="ChEBI" id="CHEBI:58289"/>
    </ligand>
</feature>
<feature type="binding site" evidence="1">
    <location>
        <position position="369"/>
    </location>
    <ligand>
        <name>(2R)-2-phosphoglycerate</name>
        <dbReference type="ChEBI" id="CHEBI:58289"/>
    </ligand>
</feature>
<feature type="binding site" evidence="1">
    <location>
        <position position="390"/>
    </location>
    <ligand>
        <name>(2R)-2-phosphoglycerate</name>
        <dbReference type="ChEBI" id="CHEBI:58289"/>
    </ligand>
</feature>
<protein>
    <recommendedName>
        <fullName evidence="1">Enolase 1</fullName>
        <ecNumber evidence="1">4.2.1.11</ecNumber>
    </recommendedName>
    <alternativeName>
        <fullName evidence="1">2-phospho-D-glycerate hydro-lyase 1</fullName>
    </alternativeName>
    <alternativeName>
        <fullName evidence="1">2-phosphoglycerate dehydratase 1</fullName>
    </alternativeName>
</protein>
<organism>
    <name type="scientific">Methylococcus capsulatus (strain ATCC 33009 / NCIMB 11132 / Bath)</name>
    <dbReference type="NCBI Taxonomy" id="243233"/>
    <lineage>
        <taxon>Bacteria</taxon>
        <taxon>Pseudomonadati</taxon>
        <taxon>Pseudomonadota</taxon>
        <taxon>Gammaproteobacteria</taxon>
        <taxon>Methylococcales</taxon>
        <taxon>Methylococcaceae</taxon>
        <taxon>Methylococcus</taxon>
    </lineage>
</organism>
<name>ENO1_METCA</name>
<proteinExistence type="inferred from homology"/>
<evidence type="ECO:0000255" key="1">
    <source>
        <dbReference type="HAMAP-Rule" id="MF_00318"/>
    </source>
</evidence>
<accession>Q606T2</accession>
<gene>
    <name evidence="1" type="primary">eno1</name>
    <name type="synonym">eno-1</name>
    <name type="ordered locus">MCA1933</name>
</gene>
<keyword id="KW-0963">Cytoplasm</keyword>
<keyword id="KW-0324">Glycolysis</keyword>
<keyword id="KW-0456">Lyase</keyword>
<keyword id="KW-0460">Magnesium</keyword>
<keyword id="KW-0479">Metal-binding</keyword>
<keyword id="KW-1185">Reference proteome</keyword>
<keyword id="KW-0964">Secreted</keyword>
<reference key="1">
    <citation type="journal article" date="2004" name="PLoS Biol.">
        <title>Genomic insights into methanotrophy: the complete genome sequence of Methylococcus capsulatus (Bath).</title>
        <authorList>
            <person name="Ward N.L."/>
            <person name="Larsen O."/>
            <person name="Sakwa J."/>
            <person name="Bruseth L."/>
            <person name="Khouri H.M."/>
            <person name="Durkin A.S."/>
            <person name="Dimitrov G."/>
            <person name="Jiang L."/>
            <person name="Scanlan D."/>
            <person name="Kang K.H."/>
            <person name="Lewis M.R."/>
            <person name="Nelson K.E."/>
            <person name="Methe B.A."/>
            <person name="Wu M."/>
            <person name="Heidelberg J.F."/>
            <person name="Paulsen I.T."/>
            <person name="Fouts D.E."/>
            <person name="Ravel J."/>
            <person name="Tettelin H."/>
            <person name="Ren Q."/>
            <person name="Read T.D."/>
            <person name="DeBoy R.T."/>
            <person name="Seshadri R."/>
            <person name="Salzberg S.L."/>
            <person name="Jensen H.B."/>
            <person name="Birkeland N.K."/>
            <person name="Nelson W.C."/>
            <person name="Dodson R.J."/>
            <person name="Grindhaug S.H."/>
            <person name="Holt I.E."/>
            <person name="Eidhammer I."/>
            <person name="Jonasen I."/>
            <person name="Vanaken S."/>
            <person name="Utterback T.R."/>
            <person name="Feldblyum T.V."/>
            <person name="Fraser C.M."/>
            <person name="Lillehaug J.R."/>
            <person name="Eisen J.A."/>
        </authorList>
    </citation>
    <scope>NUCLEOTIDE SEQUENCE [LARGE SCALE GENOMIC DNA]</scope>
    <source>
        <strain>ATCC 33009 / NCIMB 11132 / Bath</strain>
    </source>
</reference>